<dbReference type="EMBL" id="CP001396">
    <property type="protein sequence ID" value="ACR65359.1"/>
    <property type="molecule type" value="Genomic_DNA"/>
</dbReference>
<dbReference type="RefSeq" id="WP_000627807.1">
    <property type="nucleotide sequence ID" value="NC_012759.1"/>
</dbReference>
<dbReference type="SMR" id="C4ZYK2"/>
<dbReference type="GeneID" id="93774507"/>
<dbReference type="KEGG" id="ebw:BWG_2343"/>
<dbReference type="HOGENOM" id="CLU_133780_0_0_6"/>
<dbReference type="GO" id="GO:0005829">
    <property type="term" value="C:cytosol"/>
    <property type="evidence" value="ECO:0007669"/>
    <property type="project" value="TreeGrafter"/>
</dbReference>
<dbReference type="GO" id="GO:0008861">
    <property type="term" value="F:formate C-acetyltransferase activity"/>
    <property type="evidence" value="ECO:0007669"/>
    <property type="project" value="TreeGrafter"/>
</dbReference>
<dbReference type="FunFam" id="3.20.70.20:FF:000002">
    <property type="entry name" value="Autonomous glycyl radical cofactor"/>
    <property type="match status" value="1"/>
</dbReference>
<dbReference type="Gene3D" id="3.20.70.20">
    <property type="match status" value="1"/>
</dbReference>
<dbReference type="HAMAP" id="MF_00806">
    <property type="entry name" value="GrcA"/>
    <property type="match status" value="1"/>
</dbReference>
<dbReference type="InterPro" id="IPR050244">
    <property type="entry name" value="Auton_GlycylRad_Cofactor"/>
</dbReference>
<dbReference type="InterPro" id="IPR019777">
    <property type="entry name" value="Form_AcTrfase_GR_CS"/>
</dbReference>
<dbReference type="InterPro" id="IPR001150">
    <property type="entry name" value="Gly_radical"/>
</dbReference>
<dbReference type="InterPro" id="IPR011140">
    <property type="entry name" value="Glycyl_radical_cofactor_GrcA"/>
</dbReference>
<dbReference type="NCBIfam" id="TIGR04365">
    <property type="entry name" value="spare_glycyl"/>
    <property type="match status" value="1"/>
</dbReference>
<dbReference type="PANTHER" id="PTHR30191">
    <property type="entry name" value="FORMATE ACETYLTRANSFERASE"/>
    <property type="match status" value="1"/>
</dbReference>
<dbReference type="PANTHER" id="PTHR30191:SF0">
    <property type="entry name" value="FORMATE ACETYLTRANSFERASE 1"/>
    <property type="match status" value="1"/>
</dbReference>
<dbReference type="Pfam" id="PF01228">
    <property type="entry name" value="Gly_radical"/>
    <property type="match status" value="1"/>
</dbReference>
<dbReference type="PIRSF" id="PIRSF000378">
    <property type="entry name" value="Gly_radicl_yfiD"/>
    <property type="match status" value="1"/>
</dbReference>
<dbReference type="SUPFAM" id="SSF51998">
    <property type="entry name" value="PFL-like glycyl radical enzymes"/>
    <property type="match status" value="1"/>
</dbReference>
<dbReference type="PROSITE" id="PS00850">
    <property type="entry name" value="GLY_RADICAL_1"/>
    <property type="match status" value="1"/>
</dbReference>
<dbReference type="PROSITE" id="PS51149">
    <property type="entry name" value="GLY_RADICAL_2"/>
    <property type="match status" value="1"/>
</dbReference>
<organism>
    <name type="scientific">Escherichia coli (strain K12 / MC4100 / BW2952)</name>
    <dbReference type="NCBI Taxonomy" id="595496"/>
    <lineage>
        <taxon>Bacteria</taxon>
        <taxon>Pseudomonadati</taxon>
        <taxon>Pseudomonadota</taxon>
        <taxon>Gammaproteobacteria</taxon>
        <taxon>Enterobacterales</taxon>
        <taxon>Enterobacteriaceae</taxon>
        <taxon>Escherichia</taxon>
    </lineage>
</organism>
<feature type="chain" id="PRO_1000213005" description="Autonomous glycyl radical cofactor">
    <location>
        <begin position="1"/>
        <end position="127"/>
    </location>
</feature>
<feature type="domain" description="Glycine radical" evidence="1">
    <location>
        <begin position="5"/>
        <end position="127"/>
    </location>
</feature>
<feature type="modified residue" description="N6-acetyllysine" evidence="1">
    <location>
        <position position="48"/>
    </location>
</feature>
<feature type="modified residue" description="N6-acetyllysine" evidence="1">
    <location>
        <position position="88"/>
    </location>
</feature>
<feature type="modified residue" description="N6-acetyllysine" evidence="1">
    <location>
        <position position="92"/>
    </location>
</feature>
<feature type="modified residue" description="Glycine radical" evidence="1">
    <location>
        <position position="102"/>
    </location>
</feature>
<reference key="1">
    <citation type="journal article" date="2009" name="J. Bacteriol.">
        <title>Genomic sequencing reveals regulatory mutations and recombinational events in the widely used MC4100 lineage of Escherichia coli K-12.</title>
        <authorList>
            <person name="Ferenci T."/>
            <person name="Zhou Z."/>
            <person name="Betteridge T."/>
            <person name="Ren Y."/>
            <person name="Liu Y."/>
            <person name="Feng L."/>
            <person name="Reeves P.R."/>
            <person name="Wang L."/>
        </authorList>
    </citation>
    <scope>NUCLEOTIDE SEQUENCE [LARGE SCALE GENOMIC DNA]</scope>
    <source>
        <strain>K12 / MC4100 / BW2952</strain>
    </source>
</reference>
<protein>
    <recommendedName>
        <fullName evidence="1">Autonomous glycyl radical cofactor</fullName>
    </recommendedName>
</protein>
<sequence>MITGIQITKAANDDLLNSFWLLDSEKGEARCIVAKAGYAEDEVVAVSKLGDIEYREVPVEVKPEVRVEGGQHLNVNVLRRETLEDAVKHPEKYPQLTIRVSGYAVRFNSLTPEQQRDVIARTFTESL</sequence>
<keyword id="KW-0007">Acetylation</keyword>
<keyword id="KW-0556">Organic radical</keyword>
<comment type="function">
    <text evidence="1">Acts as a radical domain for damaged PFL and possibly other radical proteins.</text>
</comment>
<name>GRCA_ECOBW</name>
<accession>C4ZYK2</accession>
<proteinExistence type="inferred from homology"/>
<gene>
    <name evidence="1" type="primary">grcA</name>
    <name type="ordered locus">BWG_2343</name>
</gene>
<evidence type="ECO:0000255" key="1">
    <source>
        <dbReference type="HAMAP-Rule" id="MF_00806"/>
    </source>
</evidence>